<evidence type="ECO:0000255" key="1">
    <source>
        <dbReference type="HAMAP-Rule" id="MF_00068"/>
    </source>
</evidence>
<accession>B2VEB1</accession>
<feature type="chain" id="PRO_1000092308" description="N-acetylmuramic acid 6-phosphate etherase">
    <location>
        <begin position="1"/>
        <end position="306"/>
    </location>
</feature>
<feature type="domain" description="SIS" evidence="1">
    <location>
        <begin position="55"/>
        <end position="218"/>
    </location>
</feature>
<feature type="active site" description="Proton donor" evidence="1">
    <location>
        <position position="83"/>
    </location>
</feature>
<feature type="active site" evidence="1">
    <location>
        <position position="114"/>
    </location>
</feature>
<dbReference type="EC" id="4.2.1.126" evidence="1"/>
<dbReference type="EMBL" id="CU468135">
    <property type="protein sequence ID" value="CAO96049.1"/>
    <property type="molecule type" value="Genomic_DNA"/>
</dbReference>
<dbReference type="RefSeq" id="WP_012440750.1">
    <property type="nucleotide sequence ID" value="NC_010694.1"/>
</dbReference>
<dbReference type="SMR" id="B2VEB1"/>
<dbReference type="STRING" id="465817.ETA_10030"/>
<dbReference type="KEGG" id="eta:ETA_10030"/>
<dbReference type="eggNOG" id="COG2103">
    <property type="taxonomic scope" value="Bacteria"/>
</dbReference>
<dbReference type="HOGENOM" id="CLU_049049_1_1_6"/>
<dbReference type="OrthoDB" id="9813395at2"/>
<dbReference type="UniPathway" id="UPA00342"/>
<dbReference type="UniPathway" id="UPA00343"/>
<dbReference type="UniPathway" id="UPA00544"/>
<dbReference type="Proteomes" id="UP000001726">
    <property type="component" value="Chromosome"/>
</dbReference>
<dbReference type="GO" id="GO:0097367">
    <property type="term" value="F:carbohydrate derivative binding"/>
    <property type="evidence" value="ECO:0007669"/>
    <property type="project" value="InterPro"/>
</dbReference>
<dbReference type="GO" id="GO:0016835">
    <property type="term" value="F:carbon-oxygen lyase activity"/>
    <property type="evidence" value="ECO:0007669"/>
    <property type="project" value="UniProtKB-UniRule"/>
</dbReference>
<dbReference type="GO" id="GO:0016803">
    <property type="term" value="F:ether hydrolase activity"/>
    <property type="evidence" value="ECO:0007669"/>
    <property type="project" value="TreeGrafter"/>
</dbReference>
<dbReference type="GO" id="GO:0097175">
    <property type="term" value="P:1,6-anhydro-N-acetyl-beta-muramic acid catabolic process"/>
    <property type="evidence" value="ECO:0007669"/>
    <property type="project" value="UniProtKB-UniRule"/>
</dbReference>
<dbReference type="GO" id="GO:0046348">
    <property type="term" value="P:amino sugar catabolic process"/>
    <property type="evidence" value="ECO:0007669"/>
    <property type="project" value="InterPro"/>
</dbReference>
<dbReference type="GO" id="GO:0097173">
    <property type="term" value="P:N-acetylmuramic acid catabolic process"/>
    <property type="evidence" value="ECO:0007669"/>
    <property type="project" value="UniProtKB-UniPathway"/>
</dbReference>
<dbReference type="GO" id="GO:0009254">
    <property type="term" value="P:peptidoglycan turnover"/>
    <property type="evidence" value="ECO:0007669"/>
    <property type="project" value="UniProtKB-UniRule"/>
</dbReference>
<dbReference type="CDD" id="cd05007">
    <property type="entry name" value="SIS_Etherase"/>
    <property type="match status" value="1"/>
</dbReference>
<dbReference type="FunFam" id="1.10.8.1080:FF:000001">
    <property type="entry name" value="N-acetylmuramic acid 6-phosphate etherase"/>
    <property type="match status" value="1"/>
</dbReference>
<dbReference type="FunFam" id="3.40.50.10490:FF:000014">
    <property type="entry name" value="N-acetylmuramic acid 6-phosphate etherase"/>
    <property type="match status" value="1"/>
</dbReference>
<dbReference type="Gene3D" id="1.10.8.1080">
    <property type="match status" value="1"/>
</dbReference>
<dbReference type="Gene3D" id="3.40.50.10490">
    <property type="entry name" value="Glucose-6-phosphate isomerase like protein, domain 1"/>
    <property type="match status" value="1"/>
</dbReference>
<dbReference type="HAMAP" id="MF_00068">
    <property type="entry name" value="MurQ"/>
    <property type="match status" value="1"/>
</dbReference>
<dbReference type="InterPro" id="IPR005488">
    <property type="entry name" value="Etherase_MurQ"/>
</dbReference>
<dbReference type="InterPro" id="IPR005486">
    <property type="entry name" value="Glucokinase_regulatory_CS"/>
</dbReference>
<dbReference type="InterPro" id="IPR040190">
    <property type="entry name" value="MURQ/GCKR"/>
</dbReference>
<dbReference type="InterPro" id="IPR001347">
    <property type="entry name" value="SIS_dom"/>
</dbReference>
<dbReference type="InterPro" id="IPR046348">
    <property type="entry name" value="SIS_dom_sf"/>
</dbReference>
<dbReference type="NCBIfam" id="TIGR00274">
    <property type="entry name" value="N-acetylmuramic acid 6-phosphate etherase"/>
    <property type="match status" value="1"/>
</dbReference>
<dbReference type="NCBIfam" id="NF003915">
    <property type="entry name" value="PRK05441.1"/>
    <property type="match status" value="1"/>
</dbReference>
<dbReference type="NCBIfam" id="NF009222">
    <property type="entry name" value="PRK12570.1"/>
    <property type="match status" value="1"/>
</dbReference>
<dbReference type="PANTHER" id="PTHR10088">
    <property type="entry name" value="GLUCOKINASE REGULATORY PROTEIN"/>
    <property type="match status" value="1"/>
</dbReference>
<dbReference type="PANTHER" id="PTHR10088:SF5">
    <property type="entry name" value="N-ACETYLMURAMIC ACID 6-PHOSPHATE ETHERASE"/>
    <property type="match status" value="1"/>
</dbReference>
<dbReference type="Pfam" id="PF20741">
    <property type="entry name" value="GKRP-like_C"/>
    <property type="match status" value="1"/>
</dbReference>
<dbReference type="Pfam" id="PF22645">
    <property type="entry name" value="GKRP_SIS_N"/>
    <property type="match status" value="1"/>
</dbReference>
<dbReference type="SUPFAM" id="SSF53697">
    <property type="entry name" value="SIS domain"/>
    <property type="match status" value="1"/>
</dbReference>
<dbReference type="PROSITE" id="PS01272">
    <property type="entry name" value="GCKR"/>
    <property type="match status" value="1"/>
</dbReference>
<dbReference type="PROSITE" id="PS51464">
    <property type="entry name" value="SIS"/>
    <property type="match status" value="1"/>
</dbReference>
<proteinExistence type="inferred from homology"/>
<reference key="1">
    <citation type="journal article" date="2008" name="Environ. Microbiol.">
        <title>The genome of Erwinia tasmaniensis strain Et1/99, a non-pathogenic bacterium in the genus Erwinia.</title>
        <authorList>
            <person name="Kube M."/>
            <person name="Migdoll A.M."/>
            <person name="Mueller I."/>
            <person name="Kuhl H."/>
            <person name="Beck A."/>
            <person name="Reinhardt R."/>
            <person name="Geider K."/>
        </authorList>
    </citation>
    <scope>NUCLEOTIDE SEQUENCE [LARGE SCALE GENOMIC DNA]</scope>
    <source>
        <strain>DSM 17950 / CFBP 7177 / CIP 109463 / NCPPB 4357 / Et1/99</strain>
    </source>
</reference>
<sequence length="306" mass="31768">MDLGSLISETRNPDTLDLDNLSTLDMVTKLNQQDTTVAGAVSRTLPQVAEAVDSAAATLLAGGRLIYIGAGTSGRLGVLDASECPPTFGIPHGVVIGLIAGGPAALVTSVEGAEDDEGLGISDLQAQNLSANDMVIGLAASGRTPYAIGALRYARQLGCRTAAISCNPHSPLALEAEIAISPLVGPEALTGSTRLKSGTAQKLVLNMISTGAMIKIGKVYQNLMVDMRASNVKLVDRARRMVCEATGCEVAQAESALQQAQYEVKTAILMILTDLTAEQAGQRLAMHGGFLRAALQGHSQQPQAHK</sequence>
<name>MURQ_ERWT9</name>
<gene>
    <name evidence="1" type="primary">murQ</name>
    <name type="ordered locus">ETA_10030</name>
</gene>
<comment type="function">
    <text evidence="1">Specifically catalyzes the cleavage of the D-lactyl ether substituent of MurNAc 6-phosphate, producing GlcNAc 6-phosphate and D-lactate. Together with AnmK, is also required for the utilization of anhydro-N-acetylmuramic acid (anhMurNAc) either imported from the medium or derived from its own cell wall murein, and thus plays a role in cell wall recycling.</text>
</comment>
<comment type="catalytic activity">
    <reaction evidence="1">
        <text>N-acetyl-D-muramate 6-phosphate + H2O = N-acetyl-D-glucosamine 6-phosphate + (R)-lactate</text>
        <dbReference type="Rhea" id="RHEA:26410"/>
        <dbReference type="ChEBI" id="CHEBI:15377"/>
        <dbReference type="ChEBI" id="CHEBI:16004"/>
        <dbReference type="ChEBI" id="CHEBI:57513"/>
        <dbReference type="ChEBI" id="CHEBI:58722"/>
        <dbReference type="EC" id="4.2.1.126"/>
    </reaction>
</comment>
<comment type="pathway">
    <text evidence="1">Amino-sugar metabolism; 1,6-anhydro-N-acetylmuramate degradation.</text>
</comment>
<comment type="pathway">
    <text evidence="1">Amino-sugar metabolism; N-acetylmuramate degradation.</text>
</comment>
<comment type="pathway">
    <text evidence="1">Cell wall biogenesis; peptidoglycan recycling.</text>
</comment>
<comment type="subunit">
    <text evidence="1">Homodimer.</text>
</comment>
<comment type="induction">
    <text evidence="1">Induced by MurNAc 6-phosphate that releases the repressor MurR from the DNA. Repressed by MurR in the absence of MurNAc 6-phosphate.</text>
</comment>
<comment type="miscellaneous">
    <text evidence="1">A lyase-type mechanism (elimination/hydration) is suggested for the cleavage of the lactyl ether bond of MurNAc 6-phosphate, with the formation of an alpha,beta-unsaturated aldehyde intermediate with (E)-stereochemistry, followed by the syn addition of water to give product.</text>
</comment>
<comment type="similarity">
    <text evidence="1">Belongs to the GCKR-like family. MurNAc-6-P etherase subfamily.</text>
</comment>
<keyword id="KW-0119">Carbohydrate metabolism</keyword>
<keyword id="KW-0456">Lyase</keyword>
<keyword id="KW-1185">Reference proteome</keyword>
<protein>
    <recommendedName>
        <fullName evidence="1">N-acetylmuramic acid 6-phosphate etherase</fullName>
        <shortName evidence="1">MurNAc-6-P etherase</shortName>
        <ecNumber evidence="1">4.2.1.126</ecNumber>
    </recommendedName>
    <alternativeName>
        <fullName evidence="1">N-acetylmuramic acid 6-phosphate hydrolase</fullName>
    </alternativeName>
    <alternativeName>
        <fullName evidence="1">N-acetylmuramic acid 6-phosphate lyase</fullName>
    </alternativeName>
</protein>
<organism>
    <name type="scientific">Erwinia tasmaniensis (strain DSM 17950 / CFBP 7177 / CIP 109463 / NCPPB 4357 / Et1/99)</name>
    <dbReference type="NCBI Taxonomy" id="465817"/>
    <lineage>
        <taxon>Bacteria</taxon>
        <taxon>Pseudomonadati</taxon>
        <taxon>Pseudomonadota</taxon>
        <taxon>Gammaproteobacteria</taxon>
        <taxon>Enterobacterales</taxon>
        <taxon>Erwiniaceae</taxon>
        <taxon>Erwinia</taxon>
    </lineage>
</organism>